<keyword id="KW-0025">Alternative splicing</keyword>
<keyword id="KW-1262">Eukaryotic host gene expression shutoff by virus</keyword>
<keyword id="KW-1035">Host cytoplasm</keyword>
<keyword id="KW-1190">Host gene expression shutoff by virus</keyword>
<keyword id="KW-1192">Host mRNA suppression by virus</keyword>
<keyword id="KW-1048">Host nucleus</keyword>
<keyword id="KW-0945">Host-virus interaction</keyword>
<keyword id="KW-1090">Inhibition of host innate immune response by virus</keyword>
<keyword id="KW-1114">Inhibition of host interferon signaling pathway by virus</keyword>
<keyword id="KW-1102">Inhibition of host PKR by virus</keyword>
<keyword id="KW-1103">Inhibition of host pre-mRNA processing by virus</keyword>
<keyword id="KW-1088">Inhibition of host RIG-I by virus</keyword>
<keyword id="KW-1113">Inhibition of host RLR pathway by virus</keyword>
<keyword id="KW-0922">Interferon antiviral system evasion</keyword>
<keyword id="KW-0694">RNA-binding</keyword>
<keyword id="KW-0832">Ubl conjugation</keyword>
<keyword id="KW-0899">Viral immunoevasion</keyword>
<sequence>MDSNTVSSFQVDCFLWHVRKQFADQELGDAPVRDRLRRDQKSLRGRGSTLGLDIETATRAGKQIVERILEEESDEALKMTIASVPASRYLTDMTLEEMSRDWFMLMPKQKRAGSLCIRMDQAIMDKNIILKANFSVIFDRLETLILLRAFTEEGAIVGEISPLPSLPGHTDEDVKNAIGVLIGGLEWNDNTVRVSETLQRFAWRSSNEGGRPPLPPKQKRKMARTIESEV</sequence>
<protein>
    <recommendedName>
        <fullName evidence="1">Non-structural protein 1</fullName>
        <shortName evidence="1">NS1</shortName>
    </recommendedName>
    <alternativeName>
        <fullName evidence="1">NS1A</fullName>
    </alternativeName>
</protein>
<proteinExistence type="inferred from homology"/>
<feature type="chain" id="PRO_0000078939" description="Non-structural protein 1">
    <location>
        <begin position="1"/>
        <end position="230"/>
    </location>
</feature>
<feature type="region of interest" description="RNA-binding and homodimerization" evidence="1">
    <location>
        <begin position="1"/>
        <end position="73"/>
    </location>
</feature>
<feature type="region of interest" description="CPSF4-binding" evidence="1">
    <location>
        <begin position="180"/>
        <end position="215"/>
    </location>
</feature>
<feature type="region of interest" description="Disordered" evidence="2">
    <location>
        <begin position="205"/>
        <end position="230"/>
    </location>
</feature>
<feature type="region of interest" description="PABPN1-binding" evidence="1">
    <location>
        <begin position="223"/>
        <end position="230"/>
    </location>
</feature>
<feature type="short sequence motif" description="Nuclear localization signal" evidence="1">
    <location>
        <begin position="34"/>
        <end position="38"/>
    </location>
</feature>
<feature type="short sequence motif" description="Nuclear export signal" evidence="1">
    <location>
        <begin position="137"/>
        <end position="146"/>
    </location>
</feature>
<organism>
    <name type="scientific">Influenza A virus (strain A/Mallard/New York/6874/1978 H3N2)</name>
    <dbReference type="NCBI Taxonomy" id="384518"/>
    <lineage>
        <taxon>Viruses</taxon>
        <taxon>Riboviria</taxon>
        <taxon>Orthornavirae</taxon>
        <taxon>Negarnaviricota</taxon>
        <taxon>Polyploviricotina</taxon>
        <taxon>Insthoviricetes</taxon>
        <taxon>Articulavirales</taxon>
        <taxon>Orthomyxoviridae</taxon>
        <taxon>Alphainfluenzavirus</taxon>
        <taxon>Alphainfluenzavirus influenzae</taxon>
        <taxon>Influenza A virus</taxon>
    </lineage>
</organism>
<gene>
    <name evidence="1" type="primary">NS</name>
</gene>
<comment type="function">
    <text evidence="1">Inhibits post-transcriptional processing of cellular pre-mRNA, by binding and inhibiting two cellular proteins that are required for the 3'-end processing of cellular pre-mRNAs: the 30 kDa cleavage and polyadenylation specificity factor/CPSF4 and the poly(A)-binding protein 2/PABPN1. In turn, unprocessed 3' end pre-mRNAs accumulate in the host nucleus and are no longer exported to the cytoplasm. Cellular protein synthesis is thereby shut off very early after virus infection. Viral protein synthesis is not affected by the inhibition of the cellular 3' end processing machinery because the poly(A) tails of viral mRNAs are produced by the viral polymerase through a stuttering mechanism. Prevents the establishment of the cellular antiviral state by inhibiting TRIM25-mediated RIGI ubiquitination, which normally triggers the antiviral transduction signal that leads to the activation of type I IFN genes by transcription factors IRF3 and IRF7. Also binds poly(A) and U6 snRNA. Inhibits the integrated stress response (ISR) in the infected cell by blocking dsRNA binding by EIF2AK2/PKR and further phosphorylation of EIF2S1/EIF-2ALPHA. Stress granule formation is thus inhibited, which allows protein synthesis and viral replication.</text>
</comment>
<comment type="subunit">
    <text evidence="1">Homodimer. Interacts with host TRIM25 (via coiled coil); this interaction specifically inhibits TRIM25 multimerization and TRIM25-mediated RIGI CARD ubiquitination. Interacts with human EIF2AK2/PKR, CPSF4, IVNS1ABP and PABPN1.</text>
</comment>
<comment type="subcellular location">
    <subcellularLocation>
        <location evidence="1">Host nucleus</location>
    </subcellularLocation>
    <subcellularLocation>
        <location evidence="1">Host cytoplasm</location>
    </subcellularLocation>
    <text evidence="1">In uninfected, transfected cells, NS1 is localized in the nucleus. Only in virus infected cells, the nuclear export signal is unveiled, presumably by a viral protein, and a fraction of NS1 is exported in the cytoplasm.</text>
</comment>
<comment type="alternative products">
    <event type="alternative splicing"/>
    <isoform>
        <id>P13139-1</id>
        <name>NS1</name>
        <sequence type="displayed"/>
    </isoform>
    <isoform>
        <id>P13147-1</id>
        <name>NEP</name>
        <name>NS2</name>
        <sequence type="external"/>
    </isoform>
</comment>
<comment type="domain">
    <text evidence="1">The dsRNA-binding region is required for suppression of RNA silencing.</text>
</comment>
<comment type="PTM">
    <text evidence="1">Upon interferon induction, ISGylated via host HERC5; this results in the impairment of NS1 interaction with RNA targets due to its inability to form homodimers and to interact with host EIF2AK2/PKR.</text>
</comment>
<comment type="similarity">
    <text evidence="1">Belongs to the influenza A viruses NS1 family.</text>
</comment>
<organismHost>
    <name type="scientific">Aves</name>
    <dbReference type="NCBI Taxonomy" id="8782"/>
</organismHost>
<organismHost>
    <name type="scientific">Cetacea</name>
    <name type="common">whales</name>
    <dbReference type="NCBI Taxonomy" id="9721"/>
</organismHost>
<organismHost>
    <name type="scientific">Homo sapiens</name>
    <name type="common">Human</name>
    <dbReference type="NCBI Taxonomy" id="9606"/>
</organismHost>
<organismHost>
    <name type="scientific">Phocidae</name>
    <name type="common">true seals</name>
    <dbReference type="NCBI Taxonomy" id="9709"/>
</organismHost>
<organismHost>
    <name type="scientific">Sus scrofa</name>
    <name type="common">Pig</name>
    <dbReference type="NCBI Taxonomy" id="9823"/>
</organismHost>
<dbReference type="EMBL" id="M25375">
    <property type="protein sequence ID" value="AAA43545.1"/>
    <property type="molecule type" value="Genomic_RNA"/>
</dbReference>
<dbReference type="PIR" id="E32662">
    <property type="entry name" value="MNIVA3"/>
</dbReference>
<dbReference type="SMR" id="P13139"/>
<dbReference type="GO" id="GO:0030430">
    <property type="term" value="C:host cell cytoplasm"/>
    <property type="evidence" value="ECO:0007669"/>
    <property type="project" value="UniProtKB-SubCell"/>
</dbReference>
<dbReference type="GO" id="GO:0042025">
    <property type="term" value="C:host cell nucleus"/>
    <property type="evidence" value="ECO:0007669"/>
    <property type="project" value="UniProtKB-SubCell"/>
</dbReference>
<dbReference type="GO" id="GO:0030291">
    <property type="term" value="F:protein serine/threonine kinase inhibitor activity"/>
    <property type="evidence" value="ECO:0007669"/>
    <property type="project" value="UniProtKB-KW"/>
</dbReference>
<dbReference type="GO" id="GO:0003723">
    <property type="term" value="F:RNA binding"/>
    <property type="evidence" value="ECO:0007669"/>
    <property type="project" value="UniProtKB-KW"/>
</dbReference>
<dbReference type="GO" id="GO:0039540">
    <property type="term" value="P:symbiont-mediated suppression of host cytoplasmic pattern recognition receptor signaling pathway via inhibition of RIG-I activity"/>
    <property type="evidence" value="ECO:0007669"/>
    <property type="project" value="UniProtKB-KW"/>
</dbReference>
<dbReference type="GO" id="GO:0039657">
    <property type="term" value="P:symbiont-mediated suppression of host gene expression"/>
    <property type="evidence" value="ECO:0007669"/>
    <property type="project" value="UniProtKB-KW"/>
</dbReference>
<dbReference type="GO" id="GO:0039524">
    <property type="term" value="P:symbiont-mediated suppression of host mRNA processing"/>
    <property type="evidence" value="ECO:0007669"/>
    <property type="project" value="UniProtKB-KW"/>
</dbReference>
<dbReference type="GO" id="GO:0039580">
    <property type="term" value="P:symbiont-mediated suppression of host PKR/eIFalpha signaling"/>
    <property type="evidence" value="ECO:0007669"/>
    <property type="project" value="UniProtKB-KW"/>
</dbReference>
<dbReference type="GO" id="GO:0039502">
    <property type="term" value="P:symbiont-mediated suppression of host type I interferon-mediated signaling pathway"/>
    <property type="evidence" value="ECO:0007669"/>
    <property type="project" value="UniProtKB-KW"/>
</dbReference>
<dbReference type="FunFam" id="1.10.287.10:FF:000001">
    <property type="entry name" value="Non-structural protein 1"/>
    <property type="match status" value="1"/>
</dbReference>
<dbReference type="FunFam" id="3.30.420.330:FF:000001">
    <property type="entry name" value="Non-structural protein 1"/>
    <property type="match status" value="1"/>
</dbReference>
<dbReference type="Gene3D" id="3.30.420.330">
    <property type="entry name" value="Influenza virus non-structural protein, effector domain"/>
    <property type="match status" value="1"/>
</dbReference>
<dbReference type="Gene3D" id="1.10.287.10">
    <property type="entry name" value="S15/NS1, RNA-binding"/>
    <property type="match status" value="1"/>
</dbReference>
<dbReference type="HAMAP" id="MF_04066">
    <property type="entry name" value="INFV_NS1"/>
    <property type="match status" value="1"/>
</dbReference>
<dbReference type="InterPro" id="IPR004208">
    <property type="entry name" value="NS1"/>
</dbReference>
<dbReference type="InterPro" id="IPR000256">
    <property type="entry name" value="NS1A"/>
</dbReference>
<dbReference type="InterPro" id="IPR038064">
    <property type="entry name" value="NS1A_effect_dom-like_sf"/>
</dbReference>
<dbReference type="InterPro" id="IPR009068">
    <property type="entry name" value="uS15_NS1_RNA-bd_sf"/>
</dbReference>
<dbReference type="Pfam" id="PF00600">
    <property type="entry name" value="Flu_NS1"/>
    <property type="match status" value="1"/>
</dbReference>
<dbReference type="SUPFAM" id="SSF143021">
    <property type="entry name" value="Ns1 effector domain-like"/>
    <property type="match status" value="1"/>
</dbReference>
<dbReference type="SUPFAM" id="SSF47060">
    <property type="entry name" value="S15/NS1 RNA-binding domain"/>
    <property type="match status" value="1"/>
</dbReference>
<name>NS1_I78A4</name>
<accession>P13139</accession>
<evidence type="ECO:0000255" key="1">
    <source>
        <dbReference type="HAMAP-Rule" id="MF_04066"/>
    </source>
</evidence>
<evidence type="ECO:0000256" key="2">
    <source>
        <dbReference type="SAM" id="MobiDB-lite"/>
    </source>
</evidence>
<reference key="1">
    <citation type="journal article" date="1989" name="Virology">
        <title>The B allele of the NS gene of avian influenza viruses, but not the A allele, attenuates a human influenza A virus for squirrel monkeys.</title>
        <authorList>
            <person name="Treanor J.J."/>
            <person name="Snyder M.H."/>
            <person name="London W.T."/>
            <person name="Murphy B.R."/>
        </authorList>
    </citation>
    <scope>NUCLEOTIDE SEQUENCE [GENOMIC RNA]</scope>
</reference>
<reference key="2">
    <citation type="journal article" date="2003" name="Virology">
        <title>Intracellular warfare between human influenza viruses and human cells: the roles of the viral NS1 protein.</title>
        <authorList>
            <person name="Krug R.M."/>
            <person name="Yuan W."/>
            <person name="Noah D.L."/>
            <person name="Latham A.G."/>
        </authorList>
    </citation>
    <scope>REVIEW</scope>
</reference>